<evidence type="ECO:0000255" key="1">
    <source>
        <dbReference type="HAMAP-Rule" id="MF_01310"/>
    </source>
</evidence>
<evidence type="ECO:0000256" key="2">
    <source>
        <dbReference type="SAM" id="MobiDB-lite"/>
    </source>
</evidence>
<evidence type="ECO:0000305" key="3"/>
<dbReference type="EMBL" id="CP000780">
    <property type="protein sequence ID" value="ABS56737.1"/>
    <property type="molecule type" value="Genomic_DNA"/>
</dbReference>
<dbReference type="RefSeq" id="WP_012107797.1">
    <property type="nucleotide sequence ID" value="NC_009712.1"/>
</dbReference>
<dbReference type="SMR" id="A7IAH6"/>
<dbReference type="STRING" id="456442.Mboo_2223"/>
<dbReference type="GeneID" id="5410158"/>
<dbReference type="KEGG" id="mbn:Mboo_2223"/>
<dbReference type="eggNOG" id="arCOG04240">
    <property type="taxonomic scope" value="Archaea"/>
</dbReference>
<dbReference type="HOGENOM" id="CLU_072439_6_1_2"/>
<dbReference type="OrthoDB" id="12054at2157"/>
<dbReference type="Proteomes" id="UP000002408">
    <property type="component" value="Chromosome"/>
</dbReference>
<dbReference type="GO" id="GO:1990904">
    <property type="term" value="C:ribonucleoprotein complex"/>
    <property type="evidence" value="ECO:0007669"/>
    <property type="project" value="UniProtKB-KW"/>
</dbReference>
<dbReference type="GO" id="GO:0005840">
    <property type="term" value="C:ribosome"/>
    <property type="evidence" value="ECO:0007669"/>
    <property type="project" value="UniProtKB-KW"/>
</dbReference>
<dbReference type="GO" id="GO:0019843">
    <property type="term" value="F:rRNA binding"/>
    <property type="evidence" value="ECO:0007669"/>
    <property type="project" value="UniProtKB-UniRule"/>
</dbReference>
<dbReference type="GO" id="GO:0003735">
    <property type="term" value="F:structural constituent of ribosome"/>
    <property type="evidence" value="ECO:0007669"/>
    <property type="project" value="InterPro"/>
</dbReference>
<dbReference type="GO" id="GO:0006412">
    <property type="term" value="P:translation"/>
    <property type="evidence" value="ECO:0007669"/>
    <property type="project" value="UniProtKB-UniRule"/>
</dbReference>
<dbReference type="FunFam" id="3.30.420.80:FF:000007">
    <property type="entry name" value="30S ribosomal protein S11"/>
    <property type="match status" value="1"/>
</dbReference>
<dbReference type="Gene3D" id="3.30.420.80">
    <property type="entry name" value="Ribosomal protein S11"/>
    <property type="match status" value="1"/>
</dbReference>
<dbReference type="HAMAP" id="MF_01310">
    <property type="entry name" value="Ribosomal_uS11"/>
    <property type="match status" value="1"/>
</dbReference>
<dbReference type="InterPro" id="IPR001971">
    <property type="entry name" value="Ribosomal_uS11"/>
</dbReference>
<dbReference type="InterPro" id="IPR019961">
    <property type="entry name" value="Ribosomal_uS11_archaeal"/>
</dbReference>
<dbReference type="InterPro" id="IPR018102">
    <property type="entry name" value="Ribosomal_uS11_CS"/>
</dbReference>
<dbReference type="InterPro" id="IPR036967">
    <property type="entry name" value="Ribosomal_uS11_sf"/>
</dbReference>
<dbReference type="NCBIfam" id="TIGR03628">
    <property type="entry name" value="arch_S11P"/>
    <property type="match status" value="1"/>
</dbReference>
<dbReference type="NCBIfam" id="NF007176">
    <property type="entry name" value="PRK09607.1"/>
    <property type="match status" value="1"/>
</dbReference>
<dbReference type="PANTHER" id="PTHR11759">
    <property type="entry name" value="40S RIBOSOMAL PROTEIN S14/30S RIBOSOMAL PROTEIN S11"/>
    <property type="match status" value="1"/>
</dbReference>
<dbReference type="Pfam" id="PF00411">
    <property type="entry name" value="Ribosomal_S11"/>
    <property type="match status" value="1"/>
</dbReference>
<dbReference type="PIRSF" id="PIRSF002131">
    <property type="entry name" value="Ribosomal_S11"/>
    <property type="match status" value="1"/>
</dbReference>
<dbReference type="SUPFAM" id="SSF53137">
    <property type="entry name" value="Translational machinery components"/>
    <property type="match status" value="1"/>
</dbReference>
<dbReference type="PROSITE" id="PS00054">
    <property type="entry name" value="RIBOSOMAL_S11"/>
    <property type="match status" value="1"/>
</dbReference>
<name>RS11_METB6</name>
<protein>
    <recommendedName>
        <fullName evidence="1">Small ribosomal subunit protein uS11</fullName>
    </recommendedName>
    <alternativeName>
        <fullName evidence="3">30S ribosomal protein S11</fullName>
    </alternativeName>
</protein>
<sequence>MAANDKEKWGIAHIFASFNNTIITVTDLSGAETVTKSSGGMVVKQDRNESSPYAAMQMAANVAAIAREKGIVGVHVKVRAPGQGKQRSPGPGAQAAIRALARAGMRIGRIEDVTPVPHDSCRPKGGRRGRRV</sequence>
<keyword id="KW-1185">Reference proteome</keyword>
<keyword id="KW-0687">Ribonucleoprotein</keyword>
<keyword id="KW-0689">Ribosomal protein</keyword>
<keyword id="KW-0694">RNA-binding</keyword>
<keyword id="KW-0699">rRNA-binding</keyword>
<reference key="1">
    <citation type="journal article" date="2015" name="Microbiology">
        <title>Genome of Methanoregula boonei 6A8 reveals adaptations to oligotrophic peatland environments.</title>
        <authorList>
            <person name="Braeuer S."/>
            <person name="Cadillo-Quiroz H."/>
            <person name="Kyrpides N."/>
            <person name="Woyke T."/>
            <person name="Goodwin L."/>
            <person name="Detter C."/>
            <person name="Podell S."/>
            <person name="Yavitt J.B."/>
            <person name="Zinder S.H."/>
        </authorList>
    </citation>
    <scope>NUCLEOTIDE SEQUENCE [LARGE SCALE GENOMIC DNA]</scope>
    <source>
        <strain>DSM 21154 / JCM 14090 / 6A8</strain>
    </source>
</reference>
<accession>A7IAH6</accession>
<feature type="chain" id="PRO_0000323355" description="Small ribosomal subunit protein uS11">
    <location>
        <begin position="1"/>
        <end position="132"/>
    </location>
</feature>
<feature type="region of interest" description="Disordered" evidence="2">
    <location>
        <begin position="108"/>
        <end position="132"/>
    </location>
</feature>
<comment type="function">
    <text evidence="1">Located on the platform of the 30S subunit.</text>
</comment>
<comment type="subunit">
    <text evidence="1">Part of the 30S ribosomal subunit.</text>
</comment>
<comment type="similarity">
    <text evidence="1">Belongs to the universal ribosomal protein uS11 family.</text>
</comment>
<gene>
    <name evidence="1" type="primary">rps11</name>
    <name type="ordered locus">Mboo_2223</name>
</gene>
<organism>
    <name type="scientific">Methanoregula boonei (strain DSM 21154 / JCM 14090 / 6A8)</name>
    <dbReference type="NCBI Taxonomy" id="456442"/>
    <lineage>
        <taxon>Archaea</taxon>
        <taxon>Methanobacteriati</taxon>
        <taxon>Methanobacteriota</taxon>
        <taxon>Stenosarchaea group</taxon>
        <taxon>Methanomicrobia</taxon>
        <taxon>Methanomicrobiales</taxon>
        <taxon>Methanoregulaceae</taxon>
        <taxon>Methanoregula</taxon>
    </lineage>
</organism>
<proteinExistence type="inferred from homology"/>